<proteinExistence type="inferred from homology"/>
<gene>
    <name evidence="1" type="primary">apt</name>
    <name type="ordered locus">ACP_2871</name>
</gene>
<comment type="function">
    <text evidence="1">Catalyzes a salvage reaction resulting in the formation of AMP, that is energically less costly than de novo synthesis.</text>
</comment>
<comment type="catalytic activity">
    <reaction evidence="1">
        <text>AMP + diphosphate = 5-phospho-alpha-D-ribose 1-diphosphate + adenine</text>
        <dbReference type="Rhea" id="RHEA:16609"/>
        <dbReference type="ChEBI" id="CHEBI:16708"/>
        <dbReference type="ChEBI" id="CHEBI:33019"/>
        <dbReference type="ChEBI" id="CHEBI:58017"/>
        <dbReference type="ChEBI" id="CHEBI:456215"/>
        <dbReference type="EC" id="2.4.2.7"/>
    </reaction>
</comment>
<comment type="pathway">
    <text evidence="1">Purine metabolism; AMP biosynthesis via salvage pathway; AMP from adenine: step 1/1.</text>
</comment>
<comment type="subunit">
    <text evidence="1">Homodimer.</text>
</comment>
<comment type="subcellular location">
    <subcellularLocation>
        <location evidence="1">Cytoplasm</location>
    </subcellularLocation>
</comment>
<comment type="similarity">
    <text evidence="1">Belongs to the purine/pyrimidine phosphoribosyltransferase family.</text>
</comment>
<protein>
    <recommendedName>
        <fullName evidence="1">Adenine phosphoribosyltransferase</fullName>
        <shortName evidence="1">APRT</shortName>
        <ecNumber evidence="1">2.4.2.7</ecNumber>
    </recommendedName>
</protein>
<sequence>MQPTHSVNCEPLKSLVRTVPDFPKPGILFYDITTLLKDRQGFAKLIDALAEHYIGKNIDLVLGIEARGFIFGPALAYRLNAGFVPVRKPRKLPARTVRVTYDLEYGSDTLEIHEDAIEPGQRIVLVDDLLATGGTMEATVKLVRQLGGEIAGLAFAVELDFLKGRERFPDLDVFSLLHYSE</sequence>
<organism>
    <name type="scientific">Acidobacterium capsulatum (strain ATCC 51196 / DSM 11244 / BCRC 80197 / JCM 7670 / NBRC 15755 / NCIMB 13165 / 161)</name>
    <dbReference type="NCBI Taxonomy" id="240015"/>
    <lineage>
        <taxon>Bacteria</taxon>
        <taxon>Pseudomonadati</taxon>
        <taxon>Acidobacteriota</taxon>
        <taxon>Terriglobia</taxon>
        <taxon>Terriglobales</taxon>
        <taxon>Acidobacteriaceae</taxon>
        <taxon>Acidobacterium</taxon>
    </lineage>
</organism>
<name>APT_ACIC5</name>
<keyword id="KW-0963">Cytoplasm</keyword>
<keyword id="KW-0328">Glycosyltransferase</keyword>
<keyword id="KW-0660">Purine salvage</keyword>
<keyword id="KW-1185">Reference proteome</keyword>
<keyword id="KW-0808">Transferase</keyword>
<feature type="chain" id="PRO_1000116225" description="Adenine phosphoribosyltransferase">
    <location>
        <begin position="1"/>
        <end position="181"/>
    </location>
</feature>
<evidence type="ECO:0000255" key="1">
    <source>
        <dbReference type="HAMAP-Rule" id="MF_00004"/>
    </source>
</evidence>
<accession>C1F3T2</accession>
<dbReference type="EC" id="2.4.2.7" evidence="1"/>
<dbReference type="EMBL" id="CP001472">
    <property type="protein sequence ID" value="ACO32691.1"/>
    <property type="molecule type" value="Genomic_DNA"/>
</dbReference>
<dbReference type="RefSeq" id="WP_015897928.1">
    <property type="nucleotide sequence ID" value="NC_012483.1"/>
</dbReference>
<dbReference type="SMR" id="C1F3T2"/>
<dbReference type="FunCoup" id="C1F3T2">
    <property type="interactions" value="410"/>
</dbReference>
<dbReference type="STRING" id="240015.ACP_2871"/>
<dbReference type="KEGG" id="aca:ACP_2871"/>
<dbReference type="eggNOG" id="COG0503">
    <property type="taxonomic scope" value="Bacteria"/>
</dbReference>
<dbReference type="HOGENOM" id="CLU_063339_3_0_0"/>
<dbReference type="InParanoid" id="C1F3T2"/>
<dbReference type="OrthoDB" id="9803963at2"/>
<dbReference type="UniPathway" id="UPA00588">
    <property type="reaction ID" value="UER00646"/>
</dbReference>
<dbReference type="Proteomes" id="UP000002207">
    <property type="component" value="Chromosome"/>
</dbReference>
<dbReference type="GO" id="GO:0005737">
    <property type="term" value="C:cytoplasm"/>
    <property type="evidence" value="ECO:0007669"/>
    <property type="project" value="UniProtKB-SubCell"/>
</dbReference>
<dbReference type="GO" id="GO:0002055">
    <property type="term" value="F:adenine binding"/>
    <property type="evidence" value="ECO:0007669"/>
    <property type="project" value="TreeGrafter"/>
</dbReference>
<dbReference type="GO" id="GO:0003999">
    <property type="term" value="F:adenine phosphoribosyltransferase activity"/>
    <property type="evidence" value="ECO:0007669"/>
    <property type="project" value="UniProtKB-UniRule"/>
</dbReference>
<dbReference type="GO" id="GO:0016208">
    <property type="term" value="F:AMP binding"/>
    <property type="evidence" value="ECO:0007669"/>
    <property type="project" value="TreeGrafter"/>
</dbReference>
<dbReference type="GO" id="GO:0006168">
    <property type="term" value="P:adenine salvage"/>
    <property type="evidence" value="ECO:0007669"/>
    <property type="project" value="InterPro"/>
</dbReference>
<dbReference type="GO" id="GO:0044209">
    <property type="term" value="P:AMP salvage"/>
    <property type="evidence" value="ECO:0007669"/>
    <property type="project" value="UniProtKB-UniRule"/>
</dbReference>
<dbReference type="GO" id="GO:0006166">
    <property type="term" value="P:purine ribonucleoside salvage"/>
    <property type="evidence" value="ECO:0007669"/>
    <property type="project" value="UniProtKB-KW"/>
</dbReference>
<dbReference type="CDD" id="cd06223">
    <property type="entry name" value="PRTases_typeI"/>
    <property type="match status" value="1"/>
</dbReference>
<dbReference type="FunFam" id="3.40.50.2020:FF:000004">
    <property type="entry name" value="Adenine phosphoribosyltransferase"/>
    <property type="match status" value="1"/>
</dbReference>
<dbReference type="Gene3D" id="3.40.50.2020">
    <property type="match status" value="1"/>
</dbReference>
<dbReference type="HAMAP" id="MF_00004">
    <property type="entry name" value="Aden_phosphoribosyltr"/>
    <property type="match status" value="1"/>
</dbReference>
<dbReference type="InterPro" id="IPR005764">
    <property type="entry name" value="Ade_phspho_trans"/>
</dbReference>
<dbReference type="InterPro" id="IPR000836">
    <property type="entry name" value="PRibTrfase_dom"/>
</dbReference>
<dbReference type="InterPro" id="IPR029057">
    <property type="entry name" value="PRTase-like"/>
</dbReference>
<dbReference type="InterPro" id="IPR050054">
    <property type="entry name" value="UPRTase/APRTase"/>
</dbReference>
<dbReference type="NCBIfam" id="TIGR01090">
    <property type="entry name" value="apt"/>
    <property type="match status" value="1"/>
</dbReference>
<dbReference type="NCBIfam" id="NF002633">
    <property type="entry name" value="PRK02304.1-2"/>
    <property type="match status" value="1"/>
</dbReference>
<dbReference type="NCBIfam" id="NF002634">
    <property type="entry name" value="PRK02304.1-3"/>
    <property type="match status" value="1"/>
</dbReference>
<dbReference type="NCBIfam" id="NF002636">
    <property type="entry name" value="PRK02304.1-5"/>
    <property type="match status" value="1"/>
</dbReference>
<dbReference type="PANTHER" id="PTHR32315">
    <property type="entry name" value="ADENINE PHOSPHORIBOSYLTRANSFERASE"/>
    <property type="match status" value="1"/>
</dbReference>
<dbReference type="PANTHER" id="PTHR32315:SF3">
    <property type="entry name" value="ADENINE PHOSPHORIBOSYLTRANSFERASE"/>
    <property type="match status" value="1"/>
</dbReference>
<dbReference type="Pfam" id="PF00156">
    <property type="entry name" value="Pribosyltran"/>
    <property type="match status" value="1"/>
</dbReference>
<dbReference type="SUPFAM" id="SSF53271">
    <property type="entry name" value="PRTase-like"/>
    <property type="match status" value="1"/>
</dbReference>
<dbReference type="PROSITE" id="PS00103">
    <property type="entry name" value="PUR_PYR_PR_TRANSFER"/>
    <property type="match status" value="1"/>
</dbReference>
<reference key="1">
    <citation type="journal article" date="2009" name="Appl. Environ. Microbiol.">
        <title>Three genomes from the phylum Acidobacteria provide insight into the lifestyles of these microorganisms in soils.</title>
        <authorList>
            <person name="Ward N.L."/>
            <person name="Challacombe J.F."/>
            <person name="Janssen P.H."/>
            <person name="Henrissat B."/>
            <person name="Coutinho P.M."/>
            <person name="Wu M."/>
            <person name="Xie G."/>
            <person name="Haft D.H."/>
            <person name="Sait M."/>
            <person name="Badger J."/>
            <person name="Barabote R.D."/>
            <person name="Bradley B."/>
            <person name="Brettin T.S."/>
            <person name="Brinkac L.M."/>
            <person name="Bruce D."/>
            <person name="Creasy T."/>
            <person name="Daugherty S.C."/>
            <person name="Davidsen T.M."/>
            <person name="DeBoy R.T."/>
            <person name="Detter J.C."/>
            <person name="Dodson R.J."/>
            <person name="Durkin A.S."/>
            <person name="Ganapathy A."/>
            <person name="Gwinn-Giglio M."/>
            <person name="Han C.S."/>
            <person name="Khouri H."/>
            <person name="Kiss H."/>
            <person name="Kothari S.P."/>
            <person name="Madupu R."/>
            <person name="Nelson K.E."/>
            <person name="Nelson W.C."/>
            <person name="Paulsen I."/>
            <person name="Penn K."/>
            <person name="Ren Q."/>
            <person name="Rosovitz M.J."/>
            <person name="Selengut J.D."/>
            <person name="Shrivastava S."/>
            <person name="Sullivan S.A."/>
            <person name="Tapia R."/>
            <person name="Thompson L.S."/>
            <person name="Watkins K.L."/>
            <person name="Yang Q."/>
            <person name="Yu C."/>
            <person name="Zafar N."/>
            <person name="Zhou L."/>
            <person name="Kuske C.R."/>
        </authorList>
    </citation>
    <scope>NUCLEOTIDE SEQUENCE [LARGE SCALE GENOMIC DNA]</scope>
    <source>
        <strain>ATCC 51196 / DSM 11244 / BCRC 80197 / JCM 7670 / NBRC 15755 / NCIMB 13165 / 161</strain>
    </source>
</reference>